<proteinExistence type="inferred from homology"/>
<sequence>MMRILLFLATNLAVLVIASITLKLLGVDRFTGQNYGSLLVFCAVFGFAGSLVSLFISKWMAKMSTGTEVISQPRTRHEQWLLQTVEELSREAGIKMPEVGIFPAYEANAFATGWNKNDALVAVSQGLLERFSPDEVKAVLAHEIGHVANGDMVTLALIQGVVNTFVMFFARIFGNFVDKAILKNEDGPGIGYFVATIFAELVLGILASIIVMWFSRRREFRADAAGAHLAGTGAMIAALQRLRSEQGVPVQMPDTLNAFGINGGLKHGLAGLLMSHPPLEDRIEALRASAR</sequence>
<organism>
    <name type="scientific">Pseudomonas paraeruginosa (strain DSM 24068 / PA7)</name>
    <name type="common">Pseudomonas aeruginosa (strain PA7)</name>
    <dbReference type="NCBI Taxonomy" id="381754"/>
    <lineage>
        <taxon>Bacteria</taxon>
        <taxon>Pseudomonadati</taxon>
        <taxon>Pseudomonadota</taxon>
        <taxon>Gammaproteobacteria</taxon>
        <taxon>Pseudomonadales</taxon>
        <taxon>Pseudomonadaceae</taxon>
        <taxon>Pseudomonas</taxon>
        <taxon>Pseudomonas paraeruginosa</taxon>
    </lineage>
</organism>
<dbReference type="EC" id="3.4.24.-" evidence="1"/>
<dbReference type="EMBL" id="CP000744">
    <property type="protein sequence ID" value="ABR82956.1"/>
    <property type="molecule type" value="Genomic_DNA"/>
</dbReference>
<dbReference type="RefSeq" id="WP_003090915.1">
    <property type="nucleotide sequence ID" value="NC_009656.1"/>
</dbReference>
<dbReference type="SMR" id="A6V3R0"/>
<dbReference type="MEROPS" id="M48.002"/>
<dbReference type="GeneID" id="77220667"/>
<dbReference type="KEGG" id="pap:PSPA7_2325"/>
<dbReference type="HOGENOM" id="CLU_042266_1_0_6"/>
<dbReference type="Proteomes" id="UP000001582">
    <property type="component" value="Chromosome"/>
</dbReference>
<dbReference type="GO" id="GO:0005886">
    <property type="term" value="C:plasma membrane"/>
    <property type="evidence" value="ECO:0007669"/>
    <property type="project" value="UniProtKB-SubCell"/>
</dbReference>
<dbReference type="GO" id="GO:0004222">
    <property type="term" value="F:metalloendopeptidase activity"/>
    <property type="evidence" value="ECO:0007669"/>
    <property type="project" value="UniProtKB-UniRule"/>
</dbReference>
<dbReference type="GO" id="GO:0008270">
    <property type="term" value="F:zinc ion binding"/>
    <property type="evidence" value="ECO:0007669"/>
    <property type="project" value="UniProtKB-UniRule"/>
</dbReference>
<dbReference type="GO" id="GO:0006508">
    <property type="term" value="P:proteolysis"/>
    <property type="evidence" value="ECO:0007669"/>
    <property type="project" value="UniProtKB-KW"/>
</dbReference>
<dbReference type="CDD" id="cd07335">
    <property type="entry name" value="M48B_HtpX_like"/>
    <property type="match status" value="1"/>
</dbReference>
<dbReference type="Gene3D" id="3.30.2010.10">
    <property type="entry name" value="Metalloproteases ('zincins'), catalytic domain"/>
    <property type="match status" value="1"/>
</dbReference>
<dbReference type="HAMAP" id="MF_00188">
    <property type="entry name" value="Pept_M48_protease_HtpX"/>
    <property type="match status" value="1"/>
</dbReference>
<dbReference type="InterPro" id="IPR050083">
    <property type="entry name" value="HtpX_protease"/>
</dbReference>
<dbReference type="InterPro" id="IPR022919">
    <property type="entry name" value="Pept_M48_protease_HtpX"/>
</dbReference>
<dbReference type="InterPro" id="IPR001915">
    <property type="entry name" value="Peptidase_M48"/>
</dbReference>
<dbReference type="NCBIfam" id="NF003965">
    <property type="entry name" value="PRK05457.1"/>
    <property type="match status" value="1"/>
</dbReference>
<dbReference type="PANTHER" id="PTHR43221">
    <property type="entry name" value="PROTEASE HTPX"/>
    <property type="match status" value="1"/>
</dbReference>
<dbReference type="PANTHER" id="PTHR43221:SF1">
    <property type="entry name" value="PROTEASE HTPX"/>
    <property type="match status" value="1"/>
</dbReference>
<dbReference type="Pfam" id="PF01435">
    <property type="entry name" value="Peptidase_M48"/>
    <property type="match status" value="1"/>
</dbReference>
<keyword id="KW-0997">Cell inner membrane</keyword>
<keyword id="KW-1003">Cell membrane</keyword>
<keyword id="KW-0378">Hydrolase</keyword>
<keyword id="KW-0472">Membrane</keyword>
<keyword id="KW-0479">Metal-binding</keyword>
<keyword id="KW-0482">Metalloprotease</keyword>
<keyword id="KW-0645">Protease</keyword>
<keyword id="KW-0346">Stress response</keyword>
<keyword id="KW-0812">Transmembrane</keyword>
<keyword id="KW-1133">Transmembrane helix</keyword>
<keyword id="KW-0862">Zinc</keyword>
<comment type="cofactor">
    <cofactor evidence="1">
        <name>Zn(2+)</name>
        <dbReference type="ChEBI" id="CHEBI:29105"/>
    </cofactor>
    <text evidence="1">Binds 1 zinc ion per subunit.</text>
</comment>
<comment type="subcellular location">
    <subcellularLocation>
        <location evidence="1">Cell inner membrane</location>
        <topology evidence="1">Multi-pass membrane protein</topology>
    </subcellularLocation>
</comment>
<comment type="similarity">
    <text evidence="1">Belongs to the peptidase M48B family.</text>
</comment>
<gene>
    <name evidence="1" type="primary">htpX</name>
    <name type="ordered locus">PSPA7_2325</name>
</gene>
<accession>A6V3R0</accession>
<name>HTPX_PSEP7</name>
<protein>
    <recommendedName>
        <fullName evidence="1">Protease HtpX</fullName>
        <ecNumber evidence="1">3.4.24.-</ecNumber>
    </recommendedName>
    <alternativeName>
        <fullName evidence="1">Heat shock protein HtpX</fullName>
    </alternativeName>
</protein>
<evidence type="ECO:0000255" key="1">
    <source>
        <dbReference type="HAMAP-Rule" id="MF_00188"/>
    </source>
</evidence>
<feature type="chain" id="PRO_1000058466" description="Protease HtpX">
    <location>
        <begin position="1"/>
        <end position="291"/>
    </location>
</feature>
<feature type="transmembrane region" description="Helical" evidence="1">
    <location>
        <begin position="4"/>
        <end position="24"/>
    </location>
</feature>
<feature type="transmembrane region" description="Helical" evidence="1">
    <location>
        <begin position="36"/>
        <end position="56"/>
    </location>
</feature>
<feature type="transmembrane region" description="Helical" evidence="1">
    <location>
        <begin position="150"/>
        <end position="170"/>
    </location>
</feature>
<feature type="transmembrane region" description="Helical" evidence="1">
    <location>
        <begin position="193"/>
        <end position="213"/>
    </location>
</feature>
<feature type="active site" evidence="1">
    <location>
        <position position="143"/>
    </location>
</feature>
<feature type="binding site" evidence="1">
    <location>
        <position position="142"/>
    </location>
    <ligand>
        <name>Zn(2+)</name>
        <dbReference type="ChEBI" id="CHEBI:29105"/>
        <note>catalytic</note>
    </ligand>
</feature>
<feature type="binding site" evidence="1">
    <location>
        <position position="146"/>
    </location>
    <ligand>
        <name>Zn(2+)</name>
        <dbReference type="ChEBI" id="CHEBI:29105"/>
        <note>catalytic</note>
    </ligand>
</feature>
<feature type="binding site" evidence="1">
    <location>
        <position position="219"/>
    </location>
    <ligand>
        <name>Zn(2+)</name>
        <dbReference type="ChEBI" id="CHEBI:29105"/>
        <note>catalytic</note>
    </ligand>
</feature>
<reference key="1">
    <citation type="submission" date="2007-06" db="EMBL/GenBank/DDBJ databases">
        <authorList>
            <person name="Dodson R.J."/>
            <person name="Harkins D."/>
            <person name="Paulsen I.T."/>
        </authorList>
    </citation>
    <scope>NUCLEOTIDE SEQUENCE [LARGE SCALE GENOMIC DNA]</scope>
    <source>
        <strain>DSM 24068 / PA7</strain>
    </source>
</reference>